<gene>
    <name evidence="1" type="primary">rplL</name>
    <name type="ordered locus">ECIAI39_4371</name>
</gene>
<evidence type="ECO:0000255" key="1">
    <source>
        <dbReference type="HAMAP-Rule" id="MF_00368"/>
    </source>
</evidence>
<evidence type="ECO:0000305" key="2"/>
<proteinExistence type="inferred from homology"/>
<name>RL7_ECO7I</name>
<feature type="chain" id="PRO_1000121431" description="Large ribosomal subunit protein bL12">
    <location>
        <begin position="1"/>
        <end position="121"/>
    </location>
</feature>
<comment type="function">
    <text evidence="1">Forms part of the ribosomal stalk which helps the ribosome interact with GTP-bound translation factors. Is thus essential for accurate translation.</text>
</comment>
<comment type="subunit">
    <text evidence="1">Homodimer. Part of the ribosomal stalk of the 50S ribosomal subunit. Forms a multimeric L10(L12)X complex, where L10 forms an elongated spine to which 2 to 4 L12 dimers bind in a sequential fashion. Binds GTP-bound translation factors.</text>
</comment>
<comment type="similarity">
    <text evidence="1">Belongs to the bacterial ribosomal protein bL12 family.</text>
</comment>
<sequence>MSITKDQIIEAVAAMSVMDVVELISAMEEKFGVSAAAAVAVAAGPVEAAEEKTEFDVILKAAGANKVAVIKAVRGATGLGLKEAKDLVESAPAALKEGVSKDDAEALKKALEEAGAEVEVK</sequence>
<accession>B7NRR4</accession>
<reference key="1">
    <citation type="journal article" date="2009" name="PLoS Genet.">
        <title>Organised genome dynamics in the Escherichia coli species results in highly diverse adaptive paths.</title>
        <authorList>
            <person name="Touchon M."/>
            <person name="Hoede C."/>
            <person name="Tenaillon O."/>
            <person name="Barbe V."/>
            <person name="Baeriswyl S."/>
            <person name="Bidet P."/>
            <person name="Bingen E."/>
            <person name="Bonacorsi S."/>
            <person name="Bouchier C."/>
            <person name="Bouvet O."/>
            <person name="Calteau A."/>
            <person name="Chiapello H."/>
            <person name="Clermont O."/>
            <person name="Cruveiller S."/>
            <person name="Danchin A."/>
            <person name="Diard M."/>
            <person name="Dossat C."/>
            <person name="Karoui M.E."/>
            <person name="Frapy E."/>
            <person name="Garry L."/>
            <person name="Ghigo J.M."/>
            <person name="Gilles A.M."/>
            <person name="Johnson J."/>
            <person name="Le Bouguenec C."/>
            <person name="Lescat M."/>
            <person name="Mangenot S."/>
            <person name="Martinez-Jehanne V."/>
            <person name="Matic I."/>
            <person name="Nassif X."/>
            <person name="Oztas S."/>
            <person name="Petit M.A."/>
            <person name="Pichon C."/>
            <person name="Rouy Z."/>
            <person name="Ruf C.S."/>
            <person name="Schneider D."/>
            <person name="Tourret J."/>
            <person name="Vacherie B."/>
            <person name="Vallenet D."/>
            <person name="Medigue C."/>
            <person name="Rocha E.P.C."/>
            <person name="Denamur E."/>
        </authorList>
    </citation>
    <scope>NUCLEOTIDE SEQUENCE [LARGE SCALE GENOMIC DNA]</scope>
    <source>
        <strain>IAI39 / ExPEC</strain>
    </source>
</reference>
<organism>
    <name type="scientific">Escherichia coli O7:K1 (strain IAI39 / ExPEC)</name>
    <dbReference type="NCBI Taxonomy" id="585057"/>
    <lineage>
        <taxon>Bacteria</taxon>
        <taxon>Pseudomonadati</taxon>
        <taxon>Pseudomonadota</taxon>
        <taxon>Gammaproteobacteria</taxon>
        <taxon>Enterobacterales</taxon>
        <taxon>Enterobacteriaceae</taxon>
        <taxon>Escherichia</taxon>
    </lineage>
</organism>
<protein>
    <recommendedName>
        <fullName evidence="1">Large ribosomal subunit protein bL12</fullName>
    </recommendedName>
    <alternativeName>
        <fullName evidence="2">50S ribosomal protein L7/L12</fullName>
    </alternativeName>
</protein>
<dbReference type="EMBL" id="CU928164">
    <property type="protein sequence ID" value="CAR20477.1"/>
    <property type="molecule type" value="Genomic_DNA"/>
</dbReference>
<dbReference type="RefSeq" id="WP_000028878.1">
    <property type="nucleotide sequence ID" value="NC_011750.1"/>
</dbReference>
<dbReference type="RefSeq" id="YP_002410245.1">
    <property type="nucleotide sequence ID" value="NC_011750.1"/>
</dbReference>
<dbReference type="SMR" id="B7NRR4"/>
<dbReference type="STRING" id="585057.ECIAI39_4371"/>
<dbReference type="GeneID" id="86944525"/>
<dbReference type="KEGG" id="ect:ECIAI39_4371"/>
<dbReference type="PATRIC" id="fig|585057.6.peg.4517"/>
<dbReference type="HOGENOM" id="CLU_086499_3_2_6"/>
<dbReference type="Proteomes" id="UP000000749">
    <property type="component" value="Chromosome"/>
</dbReference>
<dbReference type="GO" id="GO:0022625">
    <property type="term" value="C:cytosolic large ribosomal subunit"/>
    <property type="evidence" value="ECO:0007669"/>
    <property type="project" value="TreeGrafter"/>
</dbReference>
<dbReference type="GO" id="GO:0003729">
    <property type="term" value="F:mRNA binding"/>
    <property type="evidence" value="ECO:0007669"/>
    <property type="project" value="TreeGrafter"/>
</dbReference>
<dbReference type="GO" id="GO:0003735">
    <property type="term" value="F:structural constituent of ribosome"/>
    <property type="evidence" value="ECO:0007669"/>
    <property type="project" value="InterPro"/>
</dbReference>
<dbReference type="GO" id="GO:0006412">
    <property type="term" value="P:translation"/>
    <property type="evidence" value="ECO:0007669"/>
    <property type="project" value="UniProtKB-UniRule"/>
</dbReference>
<dbReference type="CDD" id="cd00387">
    <property type="entry name" value="Ribosomal_L7_L12"/>
    <property type="match status" value="1"/>
</dbReference>
<dbReference type="FunFam" id="1.20.5.710:FF:000001">
    <property type="entry name" value="50S ribosomal protein L7/L12"/>
    <property type="match status" value="1"/>
</dbReference>
<dbReference type="FunFam" id="3.30.1390.10:FF:000001">
    <property type="entry name" value="50S ribosomal protein L7/L12"/>
    <property type="match status" value="1"/>
</dbReference>
<dbReference type="Gene3D" id="3.30.1390.10">
    <property type="match status" value="1"/>
</dbReference>
<dbReference type="Gene3D" id="1.20.5.710">
    <property type="entry name" value="Single helix bin"/>
    <property type="match status" value="1"/>
</dbReference>
<dbReference type="HAMAP" id="MF_00368">
    <property type="entry name" value="Ribosomal_bL12"/>
    <property type="match status" value="1"/>
</dbReference>
<dbReference type="InterPro" id="IPR000206">
    <property type="entry name" value="Ribosomal_bL12"/>
</dbReference>
<dbReference type="InterPro" id="IPR013823">
    <property type="entry name" value="Ribosomal_bL12_C"/>
</dbReference>
<dbReference type="InterPro" id="IPR014719">
    <property type="entry name" value="Ribosomal_bL12_C/ClpS-like"/>
</dbReference>
<dbReference type="InterPro" id="IPR008932">
    <property type="entry name" value="Ribosomal_bL12_oligo"/>
</dbReference>
<dbReference type="InterPro" id="IPR036235">
    <property type="entry name" value="Ribosomal_bL12_oligo_N_sf"/>
</dbReference>
<dbReference type="NCBIfam" id="TIGR00855">
    <property type="entry name" value="L12"/>
    <property type="match status" value="1"/>
</dbReference>
<dbReference type="PANTHER" id="PTHR45987">
    <property type="entry name" value="39S RIBOSOMAL PROTEIN L12"/>
    <property type="match status" value="1"/>
</dbReference>
<dbReference type="PANTHER" id="PTHR45987:SF4">
    <property type="entry name" value="LARGE RIBOSOMAL SUBUNIT PROTEIN BL12M"/>
    <property type="match status" value="1"/>
</dbReference>
<dbReference type="Pfam" id="PF00542">
    <property type="entry name" value="Ribosomal_L12"/>
    <property type="match status" value="1"/>
</dbReference>
<dbReference type="Pfam" id="PF16320">
    <property type="entry name" value="Ribosomal_L12_N"/>
    <property type="match status" value="1"/>
</dbReference>
<dbReference type="SUPFAM" id="SSF54736">
    <property type="entry name" value="ClpS-like"/>
    <property type="match status" value="1"/>
</dbReference>
<dbReference type="SUPFAM" id="SSF48300">
    <property type="entry name" value="Ribosomal protein L7/12, oligomerisation (N-terminal) domain"/>
    <property type="match status" value="1"/>
</dbReference>
<keyword id="KW-0687">Ribonucleoprotein</keyword>
<keyword id="KW-0689">Ribosomal protein</keyword>